<gene>
    <name type="primary">MT-CYB</name>
    <name type="synonym">COB</name>
    <name type="synonym">CYTB</name>
    <name type="synonym">MTCYB</name>
</gene>
<evidence type="ECO:0000250" key="1"/>
<evidence type="ECO:0000250" key="2">
    <source>
        <dbReference type="UniProtKB" id="P00157"/>
    </source>
</evidence>
<evidence type="ECO:0000255" key="3">
    <source>
        <dbReference type="PROSITE-ProRule" id="PRU00967"/>
    </source>
</evidence>
<evidence type="ECO:0000255" key="4">
    <source>
        <dbReference type="PROSITE-ProRule" id="PRU00968"/>
    </source>
</evidence>
<evidence type="ECO:0000305" key="5"/>
<name>CYB_PHYMC</name>
<sequence length="379" mass="42988">MTNIRKSHPLMKIINNAFIDLPTPSNISSWWNFGSLLGLCLIMQILTGLFLAMHYTPDTTTAFSSITHICRDVNYGWTIRYLHANGASMFFICLYTHMGRGLYYGSYIFQETWNVGMMLLITVMATAFVGYVLPWGQMSFWAATVITNLLSAIPYIGTTLVEWVWGGFSVDKATLTRFFTLHFILPFITLTLTMVHLLFLHETGSNNPTGIPSNMDKIPFHPYHTIKDTMGALLLILSLLTLTLFAPDLLGDPDNYTPANPLNTPTHIKPEWYFLFAYAILRSVPNKLGGVLALLLSILILVFIPMLHTAKQRSMMFRPFSQFLFWTLIMDLLTLTWIGGQPVEHPYVTVGQLASILYFLLILILMPTASLIENKLLKW</sequence>
<dbReference type="EMBL" id="X75589">
    <property type="protein sequence ID" value="CAA53265.1"/>
    <property type="molecule type" value="Genomic_DNA"/>
</dbReference>
<dbReference type="EMBL" id="AF304073">
    <property type="protein sequence ID" value="AAG30915.1"/>
    <property type="molecule type" value="Genomic_DNA"/>
</dbReference>
<dbReference type="EMBL" id="U13142">
    <property type="protein sequence ID" value="AAC48452.1"/>
    <property type="molecule type" value="Genomic_DNA"/>
</dbReference>
<dbReference type="PIR" id="S43270">
    <property type="entry name" value="S43270"/>
</dbReference>
<dbReference type="RefSeq" id="NP_062479.1">
    <property type="nucleotide sequence ID" value="NC_002503.2"/>
</dbReference>
<dbReference type="SMR" id="P41290"/>
<dbReference type="GeneID" id="809414"/>
<dbReference type="KEGG" id="pcad:809414"/>
<dbReference type="CTD" id="4519"/>
<dbReference type="OrthoDB" id="244at2759"/>
<dbReference type="Proteomes" id="UP000248484">
    <property type="component" value="Mitochondrion MT"/>
</dbReference>
<dbReference type="GO" id="GO:0005743">
    <property type="term" value="C:mitochondrial inner membrane"/>
    <property type="evidence" value="ECO:0007669"/>
    <property type="project" value="UniProtKB-SubCell"/>
</dbReference>
<dbReference type="GO" id="GO:0045275">
    <property type="term" value="C:respiratory chain complex III"/>
    <property type="evidence" value="ECO:0007669"/>
    <property type="project" value="InterPro"/>
</dbReference>
<dbReference type="GO" id="GO:0046872">
    <property type="term" value="F:metal ion binding"/>
    <property type="evidence" value="ECO:0007669"/>
    <property type="project" value="UniProtKB-KW"/>
</dbReference>
<dbReference type="GO" id="GO:0008121">
    <property type="term" value="F:ubiquinol-cytochrome-c reductase activity"/>
    <property type="evidence" value="ECO:0007669"/>
    <property type="project" value="InterPro"/>
</dbReference>
<dbReference type="GO" id="GO:0006122">
    <property type="term" value="P:mitochondrial electron transport, ubiquinol to cytochrome c"/>
    <property type="evidence" value="ECO:0007669"/>
    <property type="project" value="TreeGrafter"/>
</dbReference>
<dbReference type="CDD" id="cd00290">
    <property type="entry name" value="cytochrome_b_C"/>
    <property type="match status" value="1"/>
</dbReference>
<dbReference type="CDD" id="cd00284">
    <property type="entry name" value="Cytochrome_b_N"/>
    <property type="match status" value="1"/>
</dbReference>
<dbReference type="FunFam" id="1.20.810.10:FF:000002">
    <property type="entry name" value="Cytochrome b"/>
    <property type="match status" value="1"/>
</dbReference>
<dbReference type="Gene3D" id="1.20.810.10">
    <property type="entry name" value="Cytochrome Bc1 Complex, Chain C"/>
    <property type="match status" value="1"/>
</dbReference>
<dbReference type="InterPro" id="IPR005798">
    <property type="entry name" value="Cyt_b/b6_C"/>
</dbReference>
<dbReference type="InterPro" id="IPR036150">
    <property type="entry name" value="Cyt_b/b6_C_sf"/>
</dbReference>
<dbReference type="InterPro" id="IPR005797">
    <property type="entry name" value="Cyt_b/b6_N"/>
</dbReference>
<dbReference type="InterPro" id="IPR027387">
    <property type="entry name" value="Cytb/b6-like_sf"/>
</dbReference>
<dbReference type="InterPro" id="IPR030689">
    <property type="entry name" value="Cytochrome_b"/>
</dbReference>
<dbReference type="InterPro" id="IPR048260">
    <property type="entry name" value="Cytochrome_b_C_euk/bac"/>
</dbReference>
<dbReference type="InterPro" id="IPR048259">
    <property type="entry name" value="Cytochrome_b_N_euk/bac"/>
</dbReference>
<dbReference type="InterPro" id="IPR016174">
    <property type="entry name" value="Di-haem_cyt_TM"/>
</dbReference>
<dbReference type="PANTHER" id="PTHR19271">
    <property type="entry name" value="CYTOCHROME B"/>
    <property type="match status" value="1"/>
</dbReference>
<dbReference type="PANTHER" id="PTHR19271:SF16">
    <property type="entry name" value="CYTOCHROME B"/>
    <property type="match status" value="1"/>
</dbReference>
<dbReference type="Pfam" id="PF00032">
    <property type="entry name" value="Cytochrom_B_C"/>
    <property type="match status" value="1"/>
</dbReference>
<dbReference type="Pfam" id="PF00033">
    <property type="entry name" value="Cytochrome_B"/>
    <property type="match status" value="1"/>
</dbReference>
<dbReference type="PIRSF" id="PIRSF038885">
    <property type="entry name" value="COB"/>
    <property type="match status" value="1"/>
</dbReference>
<dbReference type="SUPFAM" id="SSF81648">
    <property type="entry name" value="a domain/subunit of cytochrome bc1 complex (Ubiquinol-cytochrome c reductase)"/>
    <property type="match status" value="1"/>
</dbReference>
<dbReference type="SUPFAM" id="SSF81342">
    <property type="entry name" value="Transmembrane di-heme cytochromes"/>
    <property type="match status" value="1"/>
</dbReference>
<dbReference type="PROSITE" id="PS51003">
    <property type="entry name" value="CYTB_CTER"/>
    <property type="match status" value="1"/>
</dbReference>
<dbReference type="PROSITE" id="PS51002">
    <property type="entry name" value="CYTB_NTER"/>
    <property type="match status" value="1"/>
</dbReference>
<feature type="chain" id="PRO_0000061395" description="Cytochrome b">
    <location>
        <begin position="1"/>
        <end position="379"/>
    </location>
</feature>
<feature type="transmembrane region" description="Helical" evidence="2">
    <location>
        <begin position="33"/>
        <end position="53"/>
    </location>
</feature>
<feature type="transmembrane region" description="Helical" evidence="2">
    <location>
        <begin position="77"/>
        <end position="98"/>
    </location>
</feature>
<feature type="transmembrane region" description="Helical" evidence="2">
    <location>
        <begin position="113"/>
        <end position="133"/>
    </location>
</feature>
<feature type="transmembrane region" description="Helical" evidence="2">
    <location>
        <begin position="178"/>
        <end position="198"/>
    </location>
</feature>
<feature type="transmembrane region" description="Helical" evidence="2">
    <location>
        <begin position="226"/>
        <end position="246"/>
    </location>
</feature>
<feature type="transmembrane region" description="Helical" evidence="2">
    <location>
        <begin position="288"/>
        <end position="308"/>
    </location>
</feature>
<feature type="transmembrane region" description="Helical" evidence="2">
    <location>
        <begin position="320"/>
        <end position="340"/>
    </location>
</feature>
<feature type="transmembrane region" description="Helical" evidence="2">
    <location>
        <begin position="347"/>
        <end position="367"/>
    </location>
</feature>
<feature type="binding site" description="axial binding residue" evidence="2">
    <location>
        <position position="83"/>
    </location>
    <ligand>
        <name>heme b</name>
        <dbReference type="ChEBI" id="CHEBI:60344"/>
        <label>b562</label>
    </ligand>
    <ligandPart>
        <name>Fe</name>
        <dbReference type="ChEBI" id="CHEBI:18248"/>
    </ligandPart>
</feature>
<feature type="binding site" description="axial binding residue" evidence="2">
    <location>
        <position position="97"/>
    </location>
    <ligand>
        <name>heme b</name>
        <dbReference type="ChEBI" id="CHEBI:60344"/>
        <label>b566</label>
    </ligand>
    <ligandPart>
        <name>Fe</name>
        <dbReference type="ChEBI" id="CHEBI:18248"/>
    </ligandPart>
</feature>
<feature type="binding site" description="axial binding residue" evidence="2">
    <location>
        <position position="182"/>
    </location>
    <ligand>
        <name>heme b</name>
        <dbReference type="ChEBI" id="CHEBI:60344"/>
        <label>b562</label>
    </ligand>
    <ligandPart>
        <name>Fe</name>
        <dbReference type="ChEBI" id="CHEBI:18248"/>
    </ligandPart>
</feature>
<feature type="binding site" description="axial binding residue" evidence="2">
    <location>
        <position position="196"/>
    </location>
    <ligand>
        <name>heme b</name>
        <dbReference type="ChEBI" id="CHEBI:60344"/>
        <label>b566</label>
    </ligand>
    <ligandPart>
        <name>Fe</name>
        <dbReference type="ChEBI" id="CHEBI:18248"/>
    </ligandPart>
</feature>
<feature type="binding site" evidence="2">
    <location>
        <position position="201"/>
    </location>
    <ligand>
        <name>a ubiquinone</name>
        <dbReference type="ChEBI" id="CHEBI:16389"/>
    </ligand>
</feature>
<feature type="sequence conflict" description="In Ref. 1; CAA53265." evidence="5" ref="1">
    <original>L</original>
    <variation>W</variation>
    <location>
        <position position="102"/>
    </location>
</feature>
<feature type="sequence conflict" description="In Ref. 2; AAG30915." evidence="5" ref="2">
    <original>A</original>
    <variation>T</variation>
    <location>
        <position position="125"/>
    </location>
</feature>
<accession>P41290</accession>
<accession>Q35406</accession>
<accession>Q9G7T8</accession>
<geneLocation type="mitochondrion"/>
<protein>
    <recommendedName>
        <fullName>Cytochrome b</fullName>
    </recommendedName>
    <alternativeName>
        <fullName>Complex III subunit 3</fullName>
    </alternativeName>
    <alternativeName>
        <fullName>Complex III subunit III</fullName>
    </alternativeName>
    <alternativeName>
        <fullName>Cytochrome b-c1 complex subunit 3</fullName>
    </alternativeName>
    <alternativeName>
        <fullName>Ubiquinol-cytochrome-c reductase complex cytochrome b subunit</fullName>
    </alternativeName>
</protein>
<organism>
    <name type="scientific">Physeter macrocephalus</name>
    <name type="common">Sperm whale</name>
    <name type="synonym">Physeter catodon</name>
    <dbReference type="NCBI Taxonomy" id="9755"/>
    <lineage>
        <taxon>Eukaryota</taxon>
        <taxon>Metazoa</taxon>
        <taxon>Chordata</taxon>
        <taxon>Craniata</taxon>
        <taxon>Vertebrata</taxon>
        <taxon>Euteleostomi</taxon>
        <taxon>Mammalia</taxon>
        <taxon>Eutheria</taxon>
        <taxon>Laurasiatheria</taxon>
        <taxon>Artiodactyla</taxon>
        <taxon>Whippomorpha</taxon>
        <taxon>Cetacea</taxon>
        <taxon>Odontoceti</taxon>
        <taxon>Physeteridae</taxon>
        <taxon>Physeter</taxon>
    </lineage>
</organism>
<comment type="function">
    <text evidence="2">Component of the ubiquinol-cytochrome c reductase complex (complex III or cytochrome b-c1 complex) that is part of the mitochondrial respiratory chain. The b-c1 complex mediates electron transfer from ubiquinol to cytochrome c. Contributes to the generation of a proton gradient across the mitochondrial membrane that is then used for ATP synthesis.</text>
</comment>
<comment type="cofactor">
    <cofactor evidence="2">
        <name>heme b</name>
        <dbReference type="ChEBI" id="CHEBI:60344"/>
    </cofactor>
    <text evidence="2">Binds 2 heme b groups non-covalently.</text>
</comment>
<comment type="subunit">
    <text evidence="2">The cytochrome bc1 complex contains 11 subunits: 3 respiratory subunits (MT-CYB, CYC1 and UQCRFS1), 2 core proteins (UQCRC1 and UQCRC2) and 6 low-molecular weight proteins (UQCRH/QCR6, UQCRB/QCR7, UQCRQ/QCR8, UQCR10/QCR9, UQCR11/QCR10 and a cleavage product of UQCRFS1). This cytochrome bc1 complex then forms a dimer.</text>
</comment>
<comment type="subcellular location">
    <subcellularLocation>
        <location evidence="2">Mitochondrion inner membrane</location>
        <topology evidence="2">Multi-pass membrane protein</topology>
    </subcellularLocation>
</comment>
<comment type="miscellaneous">
    <text evidence="1">Heme 1 (or BL or b562) is low-potential and absorbs at about 562 nm, and heme 2 (or BH or b566) is high-potential and absorbs at about 566 nm.</text>
</comment>
<comment type="similarity">
    <text evidence="3 4">Belongs to the cytochrome b family.</text>
</comment>
<comment type="caution">
    <text evidence="2">The full-length protein contains only eight transmembrane helices, not nine as predicted by bioinformatics tools.</text>
</comment>
<keyword id="KW-0249">Electron transport</keyword>
<keyword id="KW-0349">Heme</keyword>
<keyword id="KW-0408">Iron</keyword>
<keyword id="KW-0472">Membrane</keyword>
<keyword id="KW-0479">Metal-binding</keyword>
<keyword id="KW-0496">Mitochondrion</keyword>
<keyword id="KW-0999">Mitochondrion inner membrane</keyword>
<keyword id="KW-1185">Reference proteome</keyword>
<keyword id="KW-0679">Respiratory chain</keyword>
<keyword id="KW-0812">Transmembrane</keyword>
<keyword id="KW-1133">Transmembrane helix</keyword>
<keyword id="KW-0813">Transport</keyword>
<keyword id="KW-0830">Ubiquinone</keyword>
<reference key="1">
    <citation type="journal article" date="1994" name="Nature">
        <title>Relationship of baleen whales established by cytochrome b gene sequence comparison.</title>
        <authorList>
            <person name="Arnason U."/>
            <person name="Gullberg A."/>
        </authorList>
    </citation>
    <scope>NUCLEOTIDE SEQUENCE [GENOMIC DNA]</scope>
</reference>
<reference key="2">
    <citation type="journal article" date="2000" name="Proc. Natl. Acad. Sci. U.S.A.">
        <title>Independent adaptation to riverine habitats allowed survival of ancient cetacean lineages.</title>
        <authorList>
            <person name="Cassens I."/>
            <person name="Vicario S."/>
            <person name="Waddell V.G."/>
            <person name="Balchowsky H."/>
            <person name="Van Belle D."/>
            <person name="Ding W."/>
            <person name="Fan C."/>
            <person name="Mohan L."/>
            <person name="Simoes-Lopes P.C."/>
            <person name="Bastida R."/>
            <person name="Meyer A."/>
            <person name="Stanhope M.J."/>
            <person name="Milinkovitch M.C."/>
        </authorList>
    </citation>
    <scope>NUCLEOTIDE SEQUENCE [GENOMIC DNA]</scope>
</reference>
<reference key="3">
    <citation type="journal article" date="1994" name="Mol. Biol. Evol.">
        <title>Phylogeny of all major groups of cetaceans based on DNA sequences from three mitochondrial genes.</title>
        <authorList>
            <person name="Milinkovitch M.C."/>
            <person name="Meyer A."/>
            <person name="Powell J.R."/>
        </authorList>
    </citation>
    <scope>NUCLEOTIDE SEQUENCE [GENOMIC DNA] OF 1-134</scope>
</reference>
<proteinExistence type="inferred from homology"/>